<sequence>MPKPTKGPRLGGSPAHERIILRNLASQLFEHGHVVTTVTKAKRVRPLAEKLINRAKTDTVANRRFVNRTITDRGIVHILFTEIGPRMEGRDGGYTRVTRIGNRKGDNAPMAVIEVISDKVAPKAPASAADAKAQINTATEAKEAEPEAPAEDAAAQAPVADEQKAAEVDEKAEEKPEA</sequence>
<gene>
    <name evidence="1" type="primary">rplQ</name>
    <name type="ordered locus">PPA1825</name>
</gene>
<proteinExistence type="evidence at protein level"/>
<organism>
    <name type="scientific">Cutibacterium acnes (strain DSM 16379 / KPA171202)</name>
    <name type="common">Propionibacterium acnes</name>
    <dbReference type="NCBI Taxonomy" id="267747"/>
    <lineage>
        <taxon>Bacteria</taxon>
        <taxon>Bacillati</taxon>
        <taxon>Actinomycetota</taxon>
        <taxon>Actinomycetes</taxon>
        <taxon>Propionibacteriales</taxon>
        <taxon>Propionibacteriaceae</taxon>
        <taxon>Cutibacterium</taxon>
    </lineage>
</organism>
<comment type="subunit">
    <text evidence="1">Part of the 50S ribosomal subunit. Contacts protein L32.</text>
</comment>
<comment type="similarity">
    <text evidence="1">Belongs to the bacterial ribosomal protein bL17 family.</text>
</comment>
<feature type="chain" id="PRO_1000055906" description="Large ribosomal subunit protein bL17">
    <location>
        <begin position="1"/>
        <end position="178"/>
    </location>
</feature>
<feature type="region of interest" description="Disordered" evidence="2">
    <location>
        <begin position="123"/>
        <end position="178"/>
    </location>
</feature>
<feature type="compositionally biased region" description="Low complexity" evidence="2">
    <location>
        <begin position="123"/>
        <end position="139"/>
    </location>
</feature>
<feature type="compositionally biased region" description="Low complexity" evidence="2">
    <location>
        <begin position="151"/>
        <end position="160"/>
    </location>
</feature>
<feature type="compositionally biased region" description="Basic and acidic residues" evidence="2">
    <location>
        <begin position="161"/>
        <end position="178"/>
    </location>
</feature>
<feature type="helix" evidence="4">
    <location>
        <begin position="10"/>
        <end position="12"/>
    </location>
</feature>
<feature type="helix" evidence="4">
    <location>
        <begin position="14"/>
        <end position="31"/>
    </location>
</feature>
<feature type="strand" evidence="4">
    <location>
        <begin position="32"/>
        <end position="35"/>
    </location>
</feature>
<feature type="helix" evidence="4">
    <location>
        <begin position="38"/>
        <end position="55"/>
    </location>
</feature>
<feature type="helix" evidence="4">
    <location>
        <begin position="60"/>
        <end position="68"/>
    </location>
</feature>
<feature type="helix" evidence="4">
    <location>
        <begin position="73"/>
        <end position="81"/>
    </location>
</feature>
<feature type="helix" evidence="4">
    <location>
        <begin position="83"/>
        <end position="86"/>
    </location>
</feature>
<feature type="strand" evidence="4">
    <location>
        <begin position="95"/>
        <end position="102"/>
    </location>
</feature>
<feature type="turn" evidence="4">
    <location>
        <begin position="104"/>
        <end position="106"/>
    </location>
</feature>
<feature type="strand" evidence="4">
    <location>
        <begin position="109"/>
        <end position="115"/>
    </location>
</feature>
<name>RL17_CUTAK</name>
<dbReference type="EMBL" id="AE017283">
    <property type="protein sequence ID" value="AAT83551.1"/>
    <property type="molecule type" value="Genomic_DNA"/>
</dbReference>
<dbReference type="RefSeq" id="WP_011183932.1">
    <property type="nucleotide sequence ID" value="NC_006085.1"/>
</dbReference>
<dbReference type="PDB" id="8CVM">
    <property type="method" value="EM"/>
    <property type="resolution" value="2.66 A"/>
    <property type="chains" value="m=1-178"/>
</dbReference>
<dbReference type="PDBsum" id="8CVM"/>
<dbReference type="SMR" id="Q6A6R2"/>
<dbReference type="EnsemblBacteria" id="AAT83551">
    <property type="protein sequence ID" value="AAT83551"/>
    <property type="gene ID" value="PPA1825"/>
</dbReference>
<dbReference type="KEGG" id="pac:PPA1825"/>
<dbReference type="PATRIC" id="fig|267747.3.peg.1882"/>
<dbReference type="eggNOG" id="COG0203">
    <property type="taxonomic scope" value="Bacteria"/>
</dbReference>
<dbReference type="HOGENOM" id="CLU_074407_0_0_11"/>
<dbReference type="Proteomes" id="UP000000603">
    <property type="component" value="Chromosome"/>
</dbReference>
<dbReference type="GO" id="GO:0022625">
    <property type="term" value="C:cytosolic large ribosomal subunit"/>
    <property type="evidence" value="ECO:0007669"/>
    <property type="project" value="TreeGrafter"/>
</dbReference>
<dbReference type="GO" id="GO:0003735">
    <property type="term" value="F:structural constituent of ribosome"/>
    <property type="evidence" value="ECO:0007669"/>
    <property type="project" value="InterPro"/>
</dbReference>
<dbReference type="GO" id="GO:0006412">
    <property type="term" value="P:translation"/>
    <property type="evidence" value="ECO:0007669"/>
    <property type="project" value="UniProtKB-UniRule"/>
</dbReference>
<dbReference type="Gene3D" id="3.90.1030.10">
    <property type="entry name" value="Ribosomal protein L17"/>
    <property type="match status" value="1"/>
</dbReference>
<dbReference type="HAMAP" id="MF_01368">
    <property type="entry name" value="Ribosomal_bL17"/>
    <property type="match status" value="1"/>
</dbReference>
<dbReference type="InterPro" id="IPR000456">
    <property type="entry name" value="Ribosomal_bL17"/>
</dbReference>
<dbReference type="InterPro" id="IPR036373">
    <property type="entry name" value="Ribosomal_bL17_sf"/>
</dbReference>
<dbReference type="NCBIfam" id="TIGR00059">
    <property type="entry name" value="L17"/>
    <property type="match status" value="1"/>
</dbReference>
<dbReference type="PANTHER" id="PTHR14413:SF16">
    <property type="entry name" value="LARGE RIBOSOMAL SUBUNIT PROTEIN BL17M"/>
    <property type="match status" value="1"/>
</dbReference>
<dbReference type="PANTHER" id="PTHR14413">
    <property type="entry name" value="RIBOSOMAL PROTEIN L17"/>
    <property type="match status" value="1"/>
</dbReference>
<dbReference type="Pfam" id="PF01196">
    <property type="entry name" value="Ribosomal_L17"/>
    <property type="match status" value="1"/>
</dbReference>
<dbReference type="SUPFAM" id="SSF64263">
    <property type="entry name" value="Prokaryotic ribosomal protein L17"/>
    <property type="match status" value="1"/>
</dbReference>
<accession>Q6A6R2</accession>
<reference key="1">
    <citation type="journal article" date="2004" name="Science">
        <title>The complete genome sequence of Propionibacterium acnes, a commensal of human skin.</title>
        <authorList>
            <person name="Brueggemann H."/>
            <person name="Henne A."/>
            <person name="Hoster F."/>
            <person name="Liesegang H."/>
            <person name="Wiezer A."/>
            <person name="Strittmatter A."/>
            <person name="Hujer S."/>
            <person name="Duerre P."/>
            <person name="Gottschalk G."/>
        </authorList>
    </citation>
    <scope>NUCLEOTIDE SEQUENCE [LARGE SCALE GENOMIC DNA]</scope>
    <source>
        <strain>DSM 16379 / KPA171202</strain>
    </source>
</reference>
<keyword id="KW-0002">3D-structure</keyword>
<keyword id="KW-0687">Ribonucleoprotein</keyword>
<keyword id="KW-0689">Ribosomal protein</keyword>
<evidence type="ECO:0000255" key="1">
    <source>
        <dbReference type="HAMAP-Rule" id="MF_01368"/>
    </source>
</evidence>
<evidence type="ECO:0000256" key="2">
    <source>
        <dbReference type="SAM" id="MobiDB-lite"/>
    </source>
</evidence>
<evidence type="ECO:0000305" key="3"/>
<evidence type="ECO:0007829" key="4">
    <source>
        <dbReference type="PDB" id="8CVM"/>
    </source>
</evidence>
<protein>
    <recommendedName>
        <fullName evidence="1">Large ribosomal subunit protein bL17</fullName>
    </recommendedName>
    <alternativeName>
        <fullName evidence="3">50S ribosomal protein L17</fullName>
    </alternativeName>
</protein>